<evidence type="ECO:0000255" key="1">
    <source>
        <dbReference type="HAMAP-Rule" id="MF_01368"/>
    </source>
</evidence>
<evidence type="ECO:0000305" key="2"/>
<sequence length="113" mass="12918">MAGYRKLGRPTDQRKAMLRNLVTSFLKHGKIETTETRAKETRSIAEKMITLAKRGDLHARRQVLSFVTEETVVQRLFEEIAPKYAERNGGYTRIYKVGPRRGDGAEVVILELV</sequence>
<feature type="chain" id="PRO_1000055803" description="Large ribosomal subunit protein bL17">
    <location>
        <begin position="1"/>
        <end position="113"/>
    </location>
</feature>
<gene>
    <name evidence="1" type="primary">rplQ</name>
    <name type="ordered locus">CBO3451</name>
    <name type="ordered locus">CLC_3395</name>
</gene>
<reference key="1">
    <citation type="journal article" date="2007" name="Genome Res.">
        <title>Genome sequence of a proteolytic (Group I) Clostridium botulinum strain Hall A and comparative analysis of the clostridial genomes.</title>
        <authorList>
            <person name="Sebaihia M."/>
            <person name="Peck M.W."/>
            <person name="Minton N.P."/>
            <person name="Thomson N.R."/>
            <person name="Holden M.T.G."/>
            <person name="Mitchell W.J."/>
            <person name="Carter A.T."/>
            <person name="Bentley S.D."/>
            <person name="Mason D.R."/>
            <person name="Crossman L."/>
            <person name="Paul C.J."/>
            <person name="Ivens A."/>
            <person name="Wells-Bennik M.H.J."/>
            <person name="Davis I.J."/>
            <person name="Cerdeno-Tarraga A.M."/>
            <person name="Churcher C."/>
            <person name="Quail M.A."/>
            <person name="Chillingworth T."/>
            <person name="Feltwell T."/>
            <person name="Fraser A."/>
            <person name="Goodhead I."/>
            <person name="Hance Z."/>
            <person name="Jagels K."/>
            <person name="Larke N."/>
            <person name="Maddison M."/>
            <person name="Moule S."/>
            <person name="Mungall K."/>
            <person name="Norbertczak H."/>
            <person name="Rabbinowitsch E."/>
            <person name="Sanders M."/>
            <person name="Simmonds M."/>
            <person name="White B."/>
            <person name="Whithead S."/>
            <person name="Parkhill J."/>
        </authorList>
    </citation>
    <scope>NUCLEOTIDE SEQUENCE [LARGE SCALE GENOMIC DNA]</scope>
    <source>
        <strain>Hall / ATCC 3502 / NCTC 13319 / Type A</strain>
    </source>
</reference>
<reference key="2">
    <citation type="journal article" date="2007" name="PLoS ONE">
        <title>Analysis of the neurotoxin complex genes in Clostridium botulinum A1-A4 and B1 strains: BoNT/A3, /Ba4 and /B1 clusters are located within plasmids.</title>
        <authorList>
            <person name="Smith T.J."/>
            <person name="Hill K.K."/>
            <person name="Foley B.T."/>
            <person name="Detter J.C."/>
            <person name="Munk A.C."/>
            <person name="Bruce D.C."/>
            <person name="Doggett N.A."/>
            <person name="Smith L.A."/>
            <person name="Marks J.D."/>
            <person name="Xie G."/>
            <person name="Brettin T.S."/>
        </authorList>
    </citation>
    <scope>NUCLEOTIDE SEQUENCE [LARGE SCALE GENOMIC DNA]</scope>
    <source>
        <strain>Hall / ATCC 3502 / NCTC 13319 / Type A</strain>
    </source>
</reference>
<protein>
    <recommendedName>
        <fullName evidence="1">Large ribosomal subunit protein bL17</fullName>
    </recommendedName>
    <alternativeName>
        <fullName evidence="2">50S ribosomal protein L17</fullName>
    </alternativeName>
</protein>
<accession>A5I7H6</accession>
<accession>A7G8Q8</accession>
<keyword id="KW-1185">Reference proteome</keyword>
<keyword id="KW-0687">Ribonucleoprotein</keyword>
<keyword id="KW-0689">Ribosomal protein</keyword>
<dbReference type="EMBL" id="CP000727">
    <property type="protein sequence ID" value="ABS39076.1"/>
    <property type="molecule type" value="Genomic_DNA"/>
</dbReference>
<dbReference type="EMBL" id="AM412317">
    <property type="protein sequence ID" value="CAL85011.1"/>
    <property type="molecule type" value="Genomic_DNA"/>
</dbReference>
<dbReference type="RefSeq" id="WP_003357477.1">
    <property type="nucleotide sequence ID" value="NC_009698.1"/>
</dbReference>
<dbReference type="RefSeq" id="YP_001255932.1">
    <property type="nucleotide sequence ID" value="NC_009495.1"/>
</dbReference>
<dbReference type="RefSeq" id="YP_001389173.1">
    <property type="nucleotide sequence ID" value="NC_009698.1"/>
</dbReference>
<dbReference type="SMR" id="A5I7H6"/>
<dbReference type="GeneID" id="5187110"/>
<dbReference type="KEGG" id="cbh:CLC_3395"/>
<dbReference type="KEGG" id="cbo:CBO3451"/>
<dbReference type="PATRIC" id="fig|413999.7.peg.3427"/>
<dbReference type="HOGENOM" id="CLU_074407_2_2_9"/>
<dbReference type="PRO" id="PR:A5I7H6"/>
<dbReference type="Proteomes" id="UP000001986">
    <property type="component" value="Chromosome"/>
</dbReference>
<dbReference type="GO" id="GO:0022625">
    <property type="term" value="C:cytosolic large ribosomal subunit"/>
    <property type="evidence" value="ECO:0000318"/>
    <property type="project" value="GO_Central"/>
</dbReference>
<dbReference type="GO" id="GO:0003735">
    <property type="term" value="F:structural constituent of ribosome"/>
    <property type="evidence" value="ECO:0000318"/>
    <property type="project" value="GO_Central"/>
</dbReference>
<dbReference type="GO" id="GO:0006412">
    <property type="term" value="P:translation"/>
    <property type="evidence" value="ECO:0007669"/>
    <property type="project" value="UniProtKB-UniRule"/>
</dbReference>
<dbReference type="FunFam" id="3.90.1030.10:FF:000002">
    <property type="entry name" value="50S ribosomal protein L17"/>
    <property type="match status" value="1"/>
</dbReference>
<dbReference type="Gene3D" id="3.90.1030.10">
    <property type="entry name" value="Ribosomal protein L17"/>
    <property type="match status" value="1"/>
</dbReference>
<dbReference type="HAMAP" id="MF_01368">
    <property type="entry name" value="Ribosomal_bL17"/>
    <property type="match status" value="1"/>
</dbReference>
<dbReference type="InterPro" id="IPR000456">
    <property type="entry name" value="Ribosomal_bL17"/>
</dbReference>
<dbReference type="InterPro" id="IPR047859">
    <property type="entry name" value="Ribosomal_bL17_CS"/>
</dbReference>
<dbReference type="InterPro" id="IPR036373">
    <property type="entry name" value="Ribosomal_bL17_sf"/>
</dbReference>
<dbReference type="NCBIfam" id="TIGR00059">
    <property type="entry name" value="L17"/>
    <property type="match status" value="1"/>
</dbReference>
<dbReference type="PANTHER" id="PTHR14413:SF16">
    <property type="entry name" value="LARGE RIBOSOMAL SUBUNIT PROTEIN BL17M"/>
    <property type="match status" value="1"/>
</dbReference>
<dbReference type="PANTHER" id="PTHR14413">
    <property type="entry name" value="RIBOSOMAL PROTEIN L17"/>
    <property type="match status" value="1"/>
</dbReference>
<dbReference type="Pfam" id="PF01196">
    <property type="entry name" value="Ribosomal_L17"/>
    <property type="match status" value="1"/>
</dbReference>
<dbReference type="SUPFAM" id="SSF64263">
    <property type="entry name" value="Prokaryotic ribosomal protein L17"/>
    <property type="match status" value="1"/>
</dbReference>
<dbReference type="PROSITE" id="PS01167">
    <property type="entry name" value="RIBOSOMAL_L17"/>
    <property type="match status" value="1"/>
</dbReference>
<comment type="subunit">
    <text evidence="1">Part of the 50S ribosomal subunit. Contacts protein L32.</text>
</comment>
<comment type="similarity">
    <text evidence="1">Belongs to the bacterial ribosomal protein bL17 family.</text>
</comment>
<proteinExistence type="inferred from homology"/>
<name>RL17_CLOBH</name>
<organism>
    <name type="scientific">Clostridium botulinum (strain Hall / ATCC 3502 / NCTC 13319 / Type A)</name>
    <dbReference type="NCBI Taxonomy" id="441771"/>
    <lineage>
        <taxon>Bacteria</taxon>
        <taxon>Bacillati</taxon>
        <taxon>Bacillota</taxon>
        <taxon>Clostridia</taxon>
        <taxon>Eubacteriales</taxon>
        <taxon>Clostridiaceae</taxon>
        <taxon>Clostridium</taxon>
    </lineage>
</organism>